<dbReference type="EC" id="4.2.1.124"/>
<dbReference type="EMBL" id="AF062513">
    <property type="protein sequence ID" value="AAF21768.1"/>
    <property type="molecule type" value="mRNA"/>
</dbReference>
<dbReference type="EMBL" id="AB257562">
    <property type="protein sequence ID" value="BAF33292.1"/>
    <property type="molecule type" value="mRNA"/>
</dbReference>
<dbReference type="EMBL" id="Z97338">
    <property type="protein sequence ID" value="CAB10313.1"/>
    <property type="status" value="ALT_SEQ"/>
    <property type="molecule type" value="Genomic_DNA"/>
</dbReference>
<dbReference type="EMBL" id="AL161541">
    <property type="protein sequence ID" value="CAB78576.1"/>
    <property type="status" value="ALT_SEQ"/>
    <property type="molecule type" value="Genomic_DNA"/>
</dbReference>
<dbReference type="EMBL" id="CP002687">
    <property type="protein sequence ID" value="AEE83586.1"/>
    <property type="molecule type" value="Genomic_DNA"/>
</dbReference>
<dbReference type="PIR" id="G71417">
    <property type="entry name" value="G71417"/>
</dbReference>
<dbReference type="RefSeq" id="NP_567462.1">
    <property type="nucleotide sequence ID" value="NM_117622.3"/>
</dbReference>
<dbReference type="SMR" id="Q9FR95"/>
<dbReference type="FunCoup" id="Q9FR95">
    <property type="interactions" value="703"/>
</dbReference>
<dbReference type="STRING" id="3702.Q9FR95"/>
<dbReference type="PaxDb" id="3702-AT4G15340.1"/>
<dbReference type="ProteomicsDB" id="236683"/>
<dbReference type="EnsemblPlants" id="AT4G15340.1">
    <property type="protein sequence ID" value="AT4G15340.1"/>
    <property type="gene ID" value="AT4G15340"/>
</dbReference>
<dbReference type="GeneID" id="827200"/>
<dbReference type="Gramene" id="AT4G15340.1">
    <property type="protein sequence ID" value="AT4G15340.1"/>
    <property type="gene ID" value="AT4G15340"/>
</dbReference>
<dbReference type="KEGG" id="ath:AT4G15340"/>
<dbReference type="Araport" id="AT4G15340"/>
<dbReference type="TAIR" id="AT4G15340">
    <property type="gene designation" value="PEN1"/>
</dbReference>
<dbReference type="eggNOG" id="KOG0497">
    <property type="taxonomic scope" value="Eukaryota"/>
</dbReference>
<dbReference type="HOGENOM" id="CLU_009074_2_0_1"/>
<dbReference type="InParanoid" id="Q9FR95"/>
<dbReference type="PhylomeDB" id="Q9FR95"/>
<dbReference type="BioCyc" id="ARA:AT4G15340-MONOMER"/>
<dbReference type="BioCyc" id="MetaCyc:AT4G15340-MONOMER"/>
<dbReference type="PRO" id="PR:Q9FR95"/>
<dbReference type="Proteomes" id="UP000006548">
    <property type="component" value="Chromosome 4"/>
</dbReference>
<dbReference type="ExpressionAtlas" id="Q9FR95">
    <property type="expression patterns" value="baseline and differential"/>
</dbReference>
<dbReference type="GO" id="GO:0005811">
    <property type="term" value="C:lipid droplet"/>
    <property type="evidence" value="ECO:0007669"/>
    <property type="project" value="InterPro"/>
</dbReference>
<dbReference type="GO" id="GO:0034075">
    <property type="term" value="F:arabidiol synthase activity"/>
    <property type="evidence" value="ECO:0000314"/>
    <property type="project" value="TAIR"/>
</dbReference>
<dbReference type="GO" id="GO:0016829">
    <property type="term" value="F:lyase activity"/>
    <property type="evidence" value="ECO:0007669"/>
    <property type="project" value="UniProtKB-KW"/>
</dbReference>
<dbReference type="GO" id="GO:0010263">
    <property type="term" value="P:tricyclic triterpenoid biosynthetic process"/>
    <property type="evidence" value="ECO:0000314"/>
    <property type="project" value="TAIR"/>
</dbReference>
<dbReference type="GO" id="GO:0016104">
    <property type="term" value="P:triterpenoid biosynthetic process"/>
    <property type="evidence" value="ECO:0000314"/>
    <property type="project" value="CACAO"/>
</dbReference>
<dbReference type="CDD" id="cd02892">
    <property type="entry name" value="SQCY_1"/>
    <property type="match status" value="1"/>
</dbReference>
<dbReference type="FunFam" id="1.50.10.20:FF:000011">
    <property type="entry name" value="Terpene cyclase/mutase family member"/>
    <property type="match status" value="1"/>
</dbReference>
<dbReference type="Gene3D" id="1.50.10.20">
    <property type="match status" value="2"/>
</dbReference>
<dbReference type="InterPro" id="IPR032696">
    <property type="entry name" value="SQ_cyclase_C"/>
</dbReference>
<dbReference type="InterPro" id="IPR032697">
    <property type="entry name" value="SQ_cyclase_N"/>
</dbReference>
<dbReference type="InterPro" id="IPR018333">
    <property type="entry name" value="Squalene_cyclase"/>
</dbReference>
<dbReference type="InterPro" id="IPR002365">
    <property type="entry name" value="Terpene_synthase_CS"/>
</dbReference>
<dbReference type="InterPro" id="IPR008930">
    <property type="entry name" value="Terpenoid_cyclase/PrenylTrfase"/>
</dbReference>
<dbReference type="NCBIfam" id="TIGR01787">
    <property type="entry name" value="squalene_cyclas"/>
    <property type="match status" value="1"/>
</dbReference>
<dbReference type="PANTHER" id="PTHR11764:SF49">
    <property type="entry name" value="ARABIDIOL SYNTHASE-RELATED"/>
    <property type="match status" value="1"/>
</dbReference>
<dbReference type="PANTHER" id="PTHR11764">
    <property type="entry name" value="TERPENE CYCLASE/MUTASE FAMILY MEMBER"/>
    <property type="match status" value="1"/>
</dbReference>
<dbReference type="Pfam" id="PF13243">
    <property type="entry name" value="SQHop_cyclase_C"/>
    <property type="match status" value="1"/>
</dbReference>
<dbReference type="Pfam" id="PF13249">
    <property type="entry name" value="SQHop_cyclase_N"/>
    <property type="match status" value="1"/>
</dbReference>
<dbReference type="SFLD" id="SFLDG01016">
    <property type="entry name" value="Prenyltransferase_Like_2"/>
    <property type="match status" value="1"/>
</dbReference>
<dbReference type="SUPFAM" id="SSF48239">
    <property type="entry name" value="Terpenoid cyclases/Protein prenyltransferases"/>
    <property type="match status" value="2"/>
</dbReference>
<dbReference type="PROSITE" id="PS01074">
    <property type="entry name" value="TERPENE_SYNTHASES"/>
    <property type="match status" value="1"/>
</dbReference>
<comment type="function">
    <text evidence="2 3">Converts oxidosqualene to arabidiol. Minor production of arabidiol 20,21-epoxide.</text>
</comment>
<comment type="catalytic activity">
    <reaction evidence="2">
        <text>arabidiol = (S)-2,3-epoxysqualene + H2O</text>
        <dbReference type="Rhea" id="RHEA:31035"/>
        <dbReference type="ChEBI" id="CHEBI:15377"/>
        <dbReference type="ChEBI" id="CHEBI:15441"/>
        <dbReference type="ChEBI" id="CHEBI:62417"/>
        <dbReference type="EC" id="4.2.1.124"/>
    </reaction>
</comment>
<comment type="similarity">
    <text evidence="4">Belongs to the terpene cyclase/mutase family.</text>
</comment>
<comment type="sequence caution" evidence="4">
    <conflict type="erroneous gene model prediction">
        <sequence resource="EMBL-CDS" id="CAB10313"/>
    </conflict>
</comment>
<comment type="sequence caution" evidence="4">
    <conflict type="erroneous gene model prediction">
        <sequence resource="EMBL-CDS" id="CAB78576"/>
    </conflict>
</comment>
<protein>
    <recommendedName>
        <fullName>Arabidiol synthase</fullName>
        <ecNumber>4.2.1.124</ecNumber>
    </recommendedName>
    <alternativeName>
        <fullName>Pentacyclic triterpene synthase 1</fullName>
        <shortName>AtPEN1</shortName>
    </alternativeName>
</protein>
<name>PEN1_ARATH</name>
<sequence>MWRLRIGAKAGNDTHLFTTNNYVGRQIWEFDANAGSPQELAEVEEARRNFSNNRSHYKASADLLWRMQFLREKGFEQKIPRVRVEDAAKIRYEDAKTALKRGLHYFTALQADDGHWPADNSGPNFFIAPLVICLYITGHLEKIFTVEHRIELIRYMYNHQNEDGGWGLHVESPSIMFCTVINYICLRIVGVEAGHDDDQGSTCTKARKWILDHGGATYTPLIGKACLSVLGVYDWSGCKPMPPEFWFLPSSFPINGGTLWIYLRDIFMGLSYLYGKKFVATPTPLILQLQEELYPEPYTKINWRLTRNRCAKEDLCYPSSFLQDLFWKGVHIFSESILNRWPFNKLIRQAALRTTMKLLHYQDEANRYITGGSVPKAFHMLACWVEDPEGEYFKKHLARVSDFIWIGEDGLKIQSFGSQLWDTVMSLHFLLDGVEDDVDDEIRSTLVKGYDYLKKSQVTENPPSDHIKMFRHISKGGWTFSDKDQGWPVSDCTAESLKCCLLFERMPSEFVGQKMDVEKLFDAVDFLLYLQSDNGGITAWEPADGKTWLEWFSPVEFVQDTVIEHEYVECTGSAIVALTQFSKQFPEFRKKEVERFITNGVKYIEDLQMKDGSWCGNWGVCFIYGTLFAVRGLVAAGKTFHNCEPIRRAVRFLLDTQNQEGGWGESYLSCLRKKYTPLAGNKTNIVSTGQALMVLIMGGQMERDPLPVHRAAKVVINLQLDNGDFPQQEVMGVFNMNVLLHYPTYRNIYSLWALTLYTQALRRLQP</sequence>
<evidence type="ECO:0000250" key="1">
    <source>
        <dbReference type="UniProtKB" id="P48449"/>
    </source>
</evidence>
<evidence type="ECO:0000269" key="2">
    <source>
    </source>
</evidence>
<evidence type="ECO:0000269" key="3">
    <source>
    </source>
</evidence>
<evidence type="ECO:0000305" key="4"/>
<reference key="1">
    <citation type="journal article" date="2001" name="Plant Mol. Biol.">
        <title>Molecular cloning and expression in yeast of 2,3-oxidosqualene-triterpenoid cyclases from Arabidopsis thaliana.</title>
        <authorList>
            <person name="Husselstein-Muller T."/>
            <person name="Schaller H."/>
            <person name="Benveniste P."/>
        </authorList>
    </citation>
    <scope>NUCLEOTIDE SEQUENCE [MRNA]</scope>
    <scope>NOMENCLATURE</scope>
    <source>
        <strain>cv. Columbia</strain>
        <tissue>Hypocotyl</tissue>
    </source>
</reference>
<reference key="2">
    <citation type="journal article" date="2006" name="Org. Lett.">
        <title>A new triterpene synthase from Arabidopsis thaliana produces a tricyclic triterpene with two hydroxyl groups.</title>
        <authorList>
            <person name="Xiang T."/>
            <person name="Shibuya M."/>
            <person name="Katsube Y."/>
            <person name="Tsutsumi T."/>
            <person name="Otsuka M."/>
            <person name="Zhang H."/>
            <person name="Masuda K."/>
            <person name="Ebizuka Y."/>
        </authorList>
    </citation>
    <scope>NUCLEOTIDE SEQUENCE [MRNA]</scope>
    <scope>FUNCTION</scope>
    <scope>CATALYTIC ACTIVITY</scope>
</reference>
<reference key="3">
    <citation type="journal article" date="1998" name="Nature">
        <title>Analysis of 1.9 Mb of contiguous sequence from chromosome 4 of Arabidopsis thaliana.</title>
        <authorList>
            <person name="Bevan M."/>
            <person name="Bancroft I."/>
            <person name="Bent E."/>
            <person name="Love K."/>
            <person name="Goodman H.M."/>
            <person name="Dean C."/>
            <person name="Bergkamp R."/>
            <person name="Dirkse W."/>
            <person name="van Staveren M."/>
            <person name="Stiekema W."/>
            <person name="Drost L."/>
            <person name="Ridley P."/>
            <person name="Hudson S.-A."/>
            <person name="Patel K."/>
            <person name="Murphy G."/>
            <person name="Piffanelli P."/>
            <person name="Wedler H."/>
            <person name="Wedler E."/>
            <person name="Wambutt R."/>
            <person name="Weitzenegger T."/>
            <person name="Pohl T."/>
            <person name="Terryn N."/>
            <person name="Gielen J."/>
            <person name="Villarroel R."/>
            <person name="De Clercq R."/>
            <person name="van Montagu M."/>
            <person name="Lecharny A."/>
            <person name="Aubourg S."/>
            <person name="Gy I."/>
            <person name="Kreis M."/>
            <person name="Lao N."/>
            <person name="Kavanagh T."/>
            <person name="Hempel S."/>
            <person name="Kotter P."/>
            <person name="Entian K.-D."/>
            <person name="Rieger M."/>
            <person name="Schaefer M."/>
            <person name="Funk B."/>
            <person name="Mueller-Auer S."/>
            <person name="Silvey M."/>
            <person name="James R."/>
            <person name="Monfort A."/>
            <person name="Pons A."/>
            <person name="Puigdomenech P."/>
            <person name="Douka A."/>
            <person name="Voukelatou E."/>
            <person name="Milioni D."/>
            <person name="Hatzopoulos P."/>
            <person name="Piravandi E."/>
            <person name="Obermaier B."/>
            <person name="Hilbert H."/>
            <person name="Duesterhoeft A."/>
            <person name="Moores T."/>
            <person name="Jones J.D.G."/>
            <person name="Eneva T."/>
            <person name="Palme K."/>
            <person name="Benes V."/>
            <person name="Rechmann S."/>
            <person name="Ansorge W."/>
            <person name="Cooke R."/>
            <person name="Berger C."/>
            <person name="Delseny M."/>
            <person name="Voet M."/>
            <person name="Volckaert G."/>
            <person name="Mewes H.-W."/>
            <person name="Klosterman S."/>
            <person name="Schueller C."/>
            <person name="Chalwatzis N."/>
        </authorList>
    </citation>
    <scope>NUCLEOTIDE SEQUENCE [LARGE SCALE GENOMIC DNA]</scope>
    <source>
        <strain>cv. Columbia</strain>
    </source>
</reference>
<reference key="4">
    <citation type="journal article" date="1999" name="Nature">
        <title>Sequence and analysis of chromosome 4 of the plant Arabidopsis thaliana.</title>
        <authorList>
            <person name="Mayer K.F.X."/>
            <person name="Schueller C."/>
            <person name="Wambutt R."/>
            <person name="Murphy G."/>
            <person name="Volckaert G."/>
            <person name="Pohl T."/>
            <person name="Duesterhoeft A."/>
            <person name="Stiekema W."/>
            <person name="Entian K.-D."/>
            <person name="Terryn N."/>
            <person name="Harris B."/>
            <person name="Ansorge W."/>
            <person name="Brandt P."/>
            <person name="Grivell L.A."/>
            <person name="Rieger M."/>
            <person name="Weichselgartner M."/>
            <person name="de Simone V."/>
            <person name="Obermaier B."/>
            <person name="Mache R."/>
            <person name="Mueller M."/>
            <person name="Kreis M."/>
            <person name="Delseny M."/>
            <person name="Puigdomenech P."/>
            <person name="Watson M."/>
            <person name="Schmidtheini T."/>
            <person name="Reichert B."/>
            <person name="Portetelle D."/>
            <person name="Perez-Alonso M."/>
            <person name="Boutry M."/>
            <person name="Bancroft I."/>
            <person name="Vos P."/>
            <person name="Hoheisel J."/>
            <person name="Zimmermann W."/>
            <person name="Wedler H."/>
            <person name="Ridley P."/>
            <person name="Langham S.-A."/>
            <person name="McCullagh B."/>
            <person name="Bilham L."/>
            <person name="Robben J."/>
            <person name="van der Schueren J."/>
            <person name="Grymonprez B."/>
            <person name="Chuang Y.-J."/>
            <person name="Vandenbussche F."/>
            <person name="Braeken M."/>
            <person name="Weltjens I."/>
            <person name="Voet M."/>
            <person name="Bastiaens I."/>
            <person name="Aert R."/>
            <person name="Defoor E."/>
            <person name="Weitzenegger T."/>
            <person name="Bothe G."/>
            <person name="Ramsperger U."/>
            <person name="Hilbert H."/>
            <person name="Braun M."/>
            <person name="Holzer E."/>
            <person name="Brandt A."/>
            <person name="Peters S."/>
            <person name="van Staveren M."/>
            <person name="Dirkse W."/>
            <person name="Mooijman P."/>
            <person name="Klein Lankhorst R."/>
            <person name="Rose M."/>
            <person name="Hauf J."/>
            <person name="Koetter P."/>
            <person name="Berneiser S."/>
            <person name="Hempel S."/>
            <person name="Feldpausch M."/>
            <person name="Lamberth S."/>
            <person name="Van den Daele H."/>
            <person name="De Keyser A."/>
            <person name="Buysshaert C."/>
            <person name="Gielen J."/>
            <person name="Villarroel R."/>
            <person name="De Clercq R."/>
            <person name="van Montagu M."/>
            <person name="Rogers J."/>
            <person name="Cronin A."/>
            <person name="Quail M.A."/>
            <person name="Bray-Allen S."/>
            <person name="Clark L."/>
            <person name="Doggett J."/>
            <person name="Hall S."/>
            <person name="Kay M."/>
            <person name="Lennard N."/>
            <person name="McLay K."/>
            <person name="Mayes R."/>
            <person name="Pettett A."/>
            <person name="Rajandream M.A."/>
            <person name="Lyne M."/>
            <person name="Benes V."/>
            <person name="Rechmann S."/>
            <person name="Borkova D."/>
            <person name="Bloecker H."/>
            <person name="Scharfe M."/>
            <person name="Grimm M."/>
            <person name="Loehnert T.-H."/>
            <person name="Dose S."/>
            <person name="de Haan M."/>
            <person name="Maarse A.C."/>
            <person name="Schaefer M."/>
            <person name="Mueller-Auer S."/>
            <person name="Gabel C."/>
            <person name="Fuchs M."/>
            <person name="Fartmann B."/>
            <person name="Granderath K."/>
            <person name="Dauner D."/>
            <person name="Herzl A."/>
            <person name="Neumann S."/>
            <person name="Argiriou A."/>
            <person name="Vitale D."/>
            <person name="Liguori R."/>
            <person name="Piravandi E."/>
            <person name="Massenet O."/>
            <person name="Quigley F."/>
            <person name="Clabauld G."/>
            <person name="Muendlein A."/>
            <person name="Felber R."/>
            <person name="Schnabl S."/>
            <person name="Hiller R."/>
            <person name="Schmidt W."/>
            <person name="Lecharny A."/>
            <person name="Aubourg S."/>
            <person name="Chefdor F."/>
            <person name="Cooke R."/>
            <person name="Berger C."/>
            <person name="Monfort A."/>
            <person name="Casacuberta E."/>
            <person name="Gibbons T."/>
            <person name="Weber N."/>
            <person name="Vandenbol M."/>
            <person name="Bargues M."/>
            <person name="Terol J."/>
            <person name="Torres A."/>
            <person name="Perez-Perez A."/>
            <person name="Purnelle B."/>
            <person name="Bent E."/>
            <person name="Johnson S."/>
            <person name="Tacon D."/>
            <person name="Jesse T."/>
            <person name="Heijnen L."/>
            <person name="Schwarz S."/>
            <person name="Scholler P."/>
            <person name="Heber S."/>
            <person name="Francs P."/>
            <person name="Bielke C."/>
            <person name="Frishman D."/>
            <person name="Haase D."/>
            <person name="Lemcke K."/>
            <person name="Mewes H.-W."/>
            <person name="Stocker S."/>
            <person name="Zaccaria P."/>
            <person name="Bevan M."/>
            <person name="Wilson R.K."/>
            <person name="de la Bastide M."/>
            <person name="Habermann K."/>
            <person name="Parnell L."/>
            <person name="Dedhia N."/>
            <person name="Gnoj L."/>
            <person name="Schutz K."/>
            <person name="Huang E."/>
            <person name="Spiegel L."/>
            <person name="Sekhon M."/>
            <person name="Murray J."/>
            <person name="Sheet P."/>
            <person name="Cordes M."/>
            <person name="Abu-Threideh J."/>
            <person name="Stoneking T."/>
            <person name="Kalicki J."/>
            <person name="Graves T."/>
            <person name="Harmon G."/>
            <person name="Edwards J."/>
            <person name="Latreille P."/>
            <person name="Courtney L."/>
            <person name="Cloud J."/>
            <person name="Abbott A."/>
            <person name="Scott K."/>
            <person name="Johnson D."/>
            <person name="Minx P."/>
            <person name="Bentley D."/>
            <person name="Fulton B."/>
            <person name="Miller N."/>
            <person name="Greco T."/>
            <person name="Kemp K."/>
            <person name="Kramer J."/>
            <person name="Fulton L."/>
            <person name="Mardis E."/>
            <person name="Dante M."/>
            <person name="Pepin K."/>
            <person name="Hillier L.W."/>
            <person name="Nelson J."/>
            <person name="Spieth J."/>
            <person name="Ryan E."/>
            <person name="Andrews S."/>
            <person name="Geisel C."/>
            <person name="Layman D."/>
            <person name="Du H."/>
            <person name="Ali J."/>
            <person name="Berghoff A."/>
            <person name="Jones K."/>
            <person name="Drone K."/>
            <person name="Cotton M."/>
            <person name="Joshu C."/>
            <person name="Antonoiu B."/>
            <person name="Zidanic M."/>
            <person name="Strong C."/>
            <person name="Sun H."/>
            <person name="Lamar B."/>
            <person name="Yordan C."/>
            <person name="Ma P."/>
            <person name="Zhong J."/>
            <person name="Preston R."/>
            <person name="Vil D."/>
            <person name="Shekher M."/>
            <person name="Matero A."/>
            <person name="Shah R."/>
            <person name="Swaby I.K."/>
            <person name="O'Shaughnessy A."/>
            <person name="Rodriguez M."/>
            <person name="Hoffman J."/>
            <person name="Till S."/>
            <person name="Granat S."/>
            <person name="Shohdy N."/>
            <person name="Hasegawa A."/>
            <person name="Hameed A."/>
            <person name="Lodhi M."/>
            <person name="Johnson A."/>
            <person name="Chen E."/>
            <person name="Marra M.A."/>
            <person name="Martienssen R."/>
            <person name="McCombie W.R."/>
        </authorList>
    </citation>
    <scope>NUCLEOTIDE SEQUENCE [LARGE SCALE GENOMIC DNA]</scope>
    <source>
        <strain>cv. Columbia</strain>
    </source>
</reference>
<reference key="5">
    <citation type="journal article" date="2017" name="Plant J.">
        <title>Araport11: a complete reannotation of the Arabidopsis thaliana reference genome.</title>
        <authorList>
            <person name="Cheng C.Y."/>
            <person name="Krishnakumar V."/>
            <person name="Chan A.P."/>
            <person name="Thibaud-Nissen F."/>
            <person name="Schobel S."/>
            <person name="Town C.D."/>
        </authorList>
    </citation>
    <scope>GENOME REANNOTATION</scope>
    <source>
        <strain>cv. Columbia</strain>
    </source>
</reference>
<reference key="6">
    <citation type="journal article" date="2007" name="Org. Lett.">
        <title>Stereochemistry of water addition in triterpene synthesis: the structure of arabidiol.</title>
        <authorList>
            <person name="Kolesnikova M.D."/>
            <person name="Obermeyer A.C."/>
            <person name="Wilson W.K."/>
            <person name="Lynch D.A."/>
            <person name="Xiong Q."/>
            <person name="Matsuda S.P.T."/>
        </authorList>
    </citation>
    <scope>FUNCTION</scope>
</reference>
<accession>Q9FR95</accession>
<accession>O23388</accession>
<accession>Q08J21</accession>
<organism>
    <name type="scientific">Arabidopsis thaliana</name>
    <name type="common">Mouse-ear cress</name>
    <dbReference type="NCBI Taxonomy" id="3702"/>
    <lineage>
        <taxon>Eukaryota</taxon>
        <taxon>Viridiplantae</taxon>
        <taxon>Streptophyta</taxon>
        <taxon>Embryophyta</taxon>
        <taxon>Tracheophyta</taxon>
        <taxon>Spermatophyta</taxon>
        <taxon>Magnoliopsida</taxon>
        <taxon>eudicotyledons</taxon>
        <taxon>Gunneridae</taxon>
        <taxon>Pentapetalae</taxon>
        <taxon>rosids</taxon>
        <taxon>malvids</taxon>
        <taxon>Brassicales</taxon>
        <taxon>Brassicaceae</taxon>
        <taxon>Camelineae</taxon>
        <taxon>Arabidopsis</taxon>
    </lineage>
</organism>
<proteinExistence type="evidence at protein level"/>
<gene>
    <name type="primary">PEN1</name>
    <name type="synonym">04C11</name>
    <name type="ordered locus">At4g15340</name>
    <name type="ORF">dl3715c</name>
    <name type="ORF">FCAALL.158</name>
</gene>
<feature type="chain" id="PRO_0000366136" description="Arabidiol synthase">
    <location>
        <begin position="1"/>
        <end position="766"/>
    </location>
</feature>
<feature type="repeat" description="PFTB 1">
    <location>
        <begin position="149"/>
        <end position="190"/>
    </location>
</feature>
<feature type="repeat" description="PFTB 2">
    <location>
        <begin position="520"/>
        <end position="561"/>
    </location>
</feature>
<feature type="repeat" description="PFTB 3">
    <location>
        <begin position="597"/>
        <end position="637"/>
    </location>
</feature>
<feature type="repeat" description="PFTB 4">
    <location>
        <begin position="646"/>
        <end position="687"/>
    </location>
</feature>
<feature type="active site" description="Proton donor" evidence="1">
    <location>
        <position position="491"/>
    </location>
</feature>
<feature type="sequence conflict" description="In Ref. 2; BAF33292." evidence="4" ref="2">
    <original>H</original>
    <variation>Y</variation>
    <location>
        <position position="169"/>
    </location>
</feature>
<feature type="sequence conflict" description="In Ref. 2; BAF33292." evidence="4" ref="2">
    <original>S</original>
    <variation>G</variation>
    <location>
        <position position="496"/>
    </location>
</feature>
<keyword id="KW-0456">Lyase</keyword>
<keyword id="KW-1185">Reference proteome</keyword>
<keyword id="KW-0677">Repeat</keyword>